<evidence type="ECO:0000255" key="1">
    <source>
        <dbReference type="HAMAP-Rule" id="MF_00059"/>
    </source>
</evidence>
<comment type="function">
    <text evidence="1">DNA-dependent RNA polymerase catalyzes the transcription of DNA into RNA using the four ribonucleoside triphosphates as substrates.</text>
</comment>
<comment type="catalytic activity">
    <reaction evidence="1">
        <text>RNA(n) + a ribonucleoside 5'-triphosphate = RNA(n+1) + diphosphate</text>
        <dbReference type="Rhea" id="RHEA:21248"/>
        <dbReference type="Rhea" id="RHEA-COMP:14527"/>
        <dbReference type="Rhea" id="RHEA-COMP:17342"/>
        <dbReference type="ChEBI" id="CHEBI:33019"/>
        <dbReference type="ChEBI" id="CHEBI:61557"/>
        <dbReference type="ChEBI" id="CHEBI:140395"/>
        <dbReference type="EC" id="2.7.7.6"/>
    </reaction>
</comment>
<comment type="subunit">
    <text evidence="1">Homodimer. The RNAP catalytic core consists of 2 alpha, 1 beta, 1 beta' and 1 omega subunit. When a sigma factor is associated with the core the holoenzyme is formed, which can initiate transcription.</text>
</comment>
<comment type="domain">
    <text evidence="1">The N-terminal domain is essential for RNAP assembly and basal transcription, whereas the C-terminal domain is involved in interaction with transcriptional regulators and with upstream promoter elements.</text>
</comment>
<comment type="similarity">
    <text evidence="1">Belongs to the RNA polymerase alpha chain family.</text>
</comment>
<gene>
    <name evidence="1" type="primary">rpoA</name>
    <name type="ordered locus">SpyM50069</name>
</gene>
<sequence length="312" mass="34530">MIEFEKPIITKIDENKDYGRFVIEPLERGYGTTLGNSLRRVLLSSLPGAAVTSIKIDGVLHEFDTIPGVREDVMQIILNVKGLAVKSYVEDEKIIELEVEGPAEVTAGDILTDSDIELVNPDHYLFTIAEGHSLRATMTVAKKRGYVPAEGNKKDDAPVGTLAVDSIYTPVKKVNYQVEPARVGSNDGFDKLTIEIMTNGTIIPEDALGLSARVLIEHLNLFTDLTEVAKATEVMKETEKVNDEKVLDRTIEELDLSVRSYNCLKRAGINTVFDLTEKSEPEMMKVRNLGRKSLEEVKVKLADLGLGLKNDK</sequence>
<proteinExistence type="inferred from homology"/>
<dbReference type="EC" id="2.7.7.6" evidence="1"/>
<dbReference type="EMBL" id="AM295007">
    <property type="protein sequence ID" value="CAM29412.1"/>
    <property type="molecule type" value="Genomic_DNA"/>
</dbReference>
<dbReference type="RefSeq" id="WP_002986607.1">
    <property type="nucleotide sequence ID" value="NC_009332.1"/>
</dbReference>
<dbReference type="SMR" id="A2RC40"/>
<dbReference type="KEGG" id="spf:SpyM50069"/>
<dbReference type="HOGENOM" id="CLU_053084_0_1_9"/>
<dbReference type="GO" id="GO:0005737">
    <property type="term" value="C:cytoplasm"/>
    <property type="evidence" value="ECO:0007669"/>
    <property type="project" value="UniProtKB-ARBA"/>
</dbReference>
<dbReference type="GO" id="GO:0000428">
    <property type="term" value="C:DNA-directed RNA polymerase complex"/>
    <property type="evidence" value="ECO:0007669"/>
    <property type="project" value="UniProtKB-KW"/>
</dbReference>
<dbReference type="GO" id="GO:0003677">
    <property type="term" value="F:DNA binding"/>
    <property type="evidence" value="ECO:0007669"/>
    <property type="project" value="UniProtKB-UniRule"/>
</dbReference>
<dbReference type="GO" id="GO:0003899">
    <property type="term" value="F:DNA-directed RNA polymerase activity"/>
    <property type="evidence" value="ECO:0007669"/>
    <property type="project" value="UniProtKB-UniRule"/>
</dbReference>
<dbReference type="GO" id="GO:0046983">
    <property type="term" value="F:protein dimerization activity"/>
    <property type="evidence" value="ECO:0007669"/>
    <property type="project" value="InterPro"/>
</dbReference>
<dbReference type="GO" id="GO:0006351">
    <property type="term" value="P:DNA-templated transcription"/>
    <property type="evidence" value="ECO:0007669"/>
    <property type="project" value="UniProtKB-UniRule"/>
</dbReference>
<dbReference type="CDD" id="cd06928">
    <property type="entry name" value="RNAP_alpha_NTD"/>
    <property type="match status" value="1"/>
</dbReference>
<dbReference type="FunFam" id="1.10.150.20:FF:000001">
    <property type="entry name" value="DNA-directed RNA polymerase subunit alpha"/>
    <property type="match status" value="1"/>
</dbReference>
<dbReference type="FunFam" id="2.170.120.12:FF:000001">
    <property type="entry name" value="DNA-directed RNA polymerase subunit alpha"/>
    <property type="match status" value="1"/>
</dbReference>
<dbReference type="Gene3D" id="1.10.150.20">
    <property type="entry name" value="5' to 3' exonuclease, C-terminal subdomain"/>
    <property type="match status" value="1"/>
</dbReference>
<dbReference type="Gene3D" id="2.170.120.12">
    <property type="entry name" value="DNA-directed RNA polymerase, insert domain"/>
    <property type="match status" value="1"/>
</dbReference>
<dbReference type="Gene3D" id="3.30.1360.10">
    <property type="entry name" value="RNA polymerase, RBP11-like subunit"/>
    <property type="match status" value="1"/>
</dbReference>
<dbReference type="HAMAP" id="MF_00059">
    <property type="entry name" value="RNApol_bact_RpoA"/>
    <property type="match status" value="1"/>
</dbReference>
<dbReference type="InterPro" id="IPR011262">
    <property type="entry name" value="DNA-dir_RNA_pol_insert"/>
</dbReference>
<dbReference type="InterPro" id="IPR011263">
    <property type="entry name" value="DNA-dir_RNA_pol_RpoA/D/Rpb3"/>
</dbReference>
<dbReference type="InterPro" id="IPR011773">
    <property type="entry name" value="DNA-dir_RpoA"/>
</dbReference>
<dbReference type="InterPro" id="IPR036603">
    <property type="entry name" value="RBP11-like"/>
</dbReference>
<dbReference type="InterPro" id="IPR011260">
    <property type="entry name" value="RNAP_asu_C"/>
</dbReference>
<dbReference type="InterPro" id="IPR036643">
    <property type="entry name" value="RNApol_insert_sf"/>
</dbReference>
<dbReference type="NCBIfam" id="NF003513">
    <property type="entry name" value="PRK05182.1-2"/>
    <property type="match status" value="1"/>
</dbReference>
<dbReference type="NCBIfam" id="NF003515">
    <property type="entry name" value="PRK05182.2-1"/>
    <property type="match status" value="1"/>
</dbReference>
<dbReference type="NCBIfam" id="NF003518">
    <property type="entry name" value="PRK05182.2-4"/>
    <property type="match status" value="1"/>
</dbReference>
<dbReference type="NCBIfam" id="NF003519">
    <property type="entry name" value="PRK05182.2-5"/>
    <property type="match status" value="1"/>
</dbReference>
<dbReference type="NCBIfam" id="TIGR02027">
    <property type="entry name" value="rpoA"/>
    <property type="match status" value="1"/>
</dbReference>
<dbReference type="Pfam" id="PF01000">
    <property type="entry name" value="RNA_pol_A_bac"/>
    <property type="match status" value="1"/>
</dbReference>
<dbReference type="Pfam" id="PF03118">
    <property type="entry name" value="RNA_pol_A_CTD"/>
    <property type="match status" value="1"/>
</dbReference>
<dbReference type="Pfam" id="PF01193">
    <property type="entry name" value="RNA_pol_L"/>
    <property type="match status" value="1"/>
</dbReference>
<dbReference type="SMART" id="SM00662">
    <property type="entry name" value="RPOLD"/>
    <property type="match status" value="1"/>
</dbReference>
<dbReference type="SUPFAM" id="SSF47789">
    <property type="entry name" value="C-terminal domain of RNA polymerase alpha subunit"/>
    <property type="match status" value="1"/>
</dbReference>
<dbReference type="SUPFAM" id="SSF56553">
    <property type="entry name" value="Insert subdomain of RNA polymerase alpha subunit"/>
    <property type="match status" value="1"/>
</dbReference>
<dbReference type="SUPFAM" id="SSF55257">
    <property type="entry name" value="RBP11-like subunits of RNA polymerase"/>
    <property type="match status" value="1"/>
</dbReference>
<reference key="1">
    <citation type="journal article" date="2007" name="J. Bacteriol.">
        <title>Complete genome of acute rheumatic fever-associated serotype M5 Streptococcus pyogenes strain Manfredo.</title>
        <authorList>
            <person name="Holden M.T.G."/>
            <person name="Scott A."/>
            <person name="Cherevach I."/>
            <person name="Chillingworth T."/>
            <person name="Churcher C."/>
            <person name="Cronin A."/>
            <person name="Dowd L."/>
            <person name="Feltwell T."/>
            <person name="Hamlin N."/>
            <person name="Holroyd S."/>
            <person name="Jagels K."/>
            <person name="Moule S."/>
            <person name="Mungall K."/>
            <person name="Quail M.A."/>
            <person name="Price C."/>
            <person name="Rabbinowitsch E."/>
            <person name="Sharp S."/>
            <person name="Skelton J."/>
            <person name="Whitehead S."/>
            <person name="Barrell B.G."/>
            <person name="Kehoe M."/>
            <person name="Parkhill J."/>
        </authorList>
    </citation>
    <scope>NUCLEOTIDE SEQUENCE [LARGE SCALE GENOMIC DNA]</scope>
    <source>
        <strain>Manfredo</strain>
    </source>
</reference>
<protein>
    <recommendedName>
        <fullName evidence="1">DNA-directed RNA polymerase subunit alpha</fullName>
        <shortName evidence="1">RNAP subunit alpha</shortName>
        <ecNumber evidence="1">2.7.7.6</ecNumber>
    </recommendedName>
    <alternativeName>
        <fullName evidence="1">RNA polymerase subunit alpha</fullName>
    </alternativeName>
    <alternativeName>
        <fullName evidence="1">Transcriptase subunit alpha</fullName>
    </alternativeName>
</protein>
<keyword id="KW-0240">DNA-directed RNA polymerase</keyword>
<keyword id="KW-0548">Nucleotidyltransferase</keyword>
<keyword id="KW-0804">Transcription</keyword>
<keyword id="KW-0808">Transferase</keyword>
<feature type="chain" id="PRO_0000296872" description="DNA-directed RNA polymerase subunit alpha">
    <location>
        <begin position="1"/>
        <end position="312"/>
    </location>
</feature>
<feature type="region of interest" description="Alpha N-terminal domain (alpha-NTD)" evidence="1">
    <location>
        <begin position="1"/>
        <end position="226"/>
    </location>
</feature>
<feature type="region of interest" description="Alpha C-terminal domain (alpha-CTD)" evidence="1">
    <location>
        <begin position="242"/>
        <end position="312"/>
    </location>
</feature>
<accession>A2RC40</accession>
<name>RPOA_STRPG</name>
<organism>
    <name type="scientific">Streptococcus pyogenes serotype M5 (strain Manfredo)</name>
    <dbReference type="NCBI Taxonomy" id="160491"/>
    <lineage>
        <taxon>Bacteria</taxon>
        <taxon>Bacillati</taxon>
        <taxon>Bacillota</taxon>
        <taxon>Bacilli</taxon>
        <taxon>Lactobacillales</taxon>
        <taxon>Streptococcaceae</taxon>
        <taxon>Streptococcus</taxon>
    </lineage>
</organism>